<name>APT_MUSPA</name>
<evidence type="ECO:0000250" key="1">
    <source>
        <dbReference type="UniProtKB" id="P07741"/>
    </source>
</evidence>
<evidence type="ECO:0000250" key="2">
    <source>
        <dbReference type="UniProtKB" id="P36972"/>
    </source>
</evidence>
<evidence type="ECO:0000305" key="3"/>
<dbReference type="EC" id="2.4.2.7" evidence="1"/>
<dbReference type="EMBL" id="U28721">
    <property type="protein sequence ID" value="AAA68957.1"/>
    <property type="molecule type" value="Genomic_DNA"/>
</dbReference>
<dbReference type="SMR" id="P47956"/>
<dbReference type="UniPathway" id="UPA00588">
    <property type="reaction ID" value="UER00646"/>
</dbReference>
<dbReference type="GO" id="GO:0005737">
    <property type="term" value="C:cytoplasm"/>
    <property type="evidence" value="ECO:0007669"/>
    <property type="project" value="UniProtKB-SubCell"/>
</dbReference>
<dbReference type="GO" id="GO:0002055">
    <property type="term" value="F:adenine binding"/>
    <property type="evidence" value="ECO:0007669"/>
    <property type="project" value="TreeGrafter"/>
</dbReference>
<dbReference type="GO" id="GO:0003999">
    <property type="term" value="F:adenine phosphoribosyltransferase activity"/>
    <property type="evidence" value="ECO:0000250"/>
    <property type="project" value="UniProtKB"/>
</dbReference>
<dbReference type="GO" id="GO:0016208">
    <property type="term" value="F:AMP binding"/>
    <property type="evidence" value="ECO:0007669"/>
    <property type="project" value="TreeGrafter"/>
</dbReference>
<dbReference type="GO" id="GO:0006168">
    <property type="term" value="P:adenine salvage"/>
    <property type="evidence" value="ECO:0007669"/>
    <property type="project" value="InterPro"/>
</dbReference>
<dbReference type="GO" id="GO:0044209">
    <property type="term" value="P:AMP salvage"/>
    <property type="evidence" value="ECO:0007669"/>
    <property type="project" value="UniProtKB-UniPathway"/>
</dbReference>
<dbReference type="GO" id="GO:0006166">
    <property type="term" value="P:purine ribonucleoside salvage"/>
    <property type="evidence" value="ECO:0007669"/>
    <property type="project" value="UniProtKB-KW"/>
</dbReference>
<dbReference type="CDD" id="cd06223">
    <property type="entry name" value="PRTases_typeI"/>
    <property type="match status" value="1"/>
</dbReference>
<dbReference type="FunFam" id="3.40.50.2020:FF:000123">
    <property type="entry name" value="Adenine phosphoribosyltransferase"/>
    <property type="match status" value="1"/>
</dbReference>
<dbReference type="Gene3D" id="3.40.50.2020">
    <property type="match status" value="1"/>
</dbReference>
<dbReference type="HAMAP" id="MF_00004">
    <property type="entry name" value="Aden_phosphoribosyltr"/>
    <property type="match status" value="1"/>
</dbReference>
<dbReference type="InterPro" id="IPR005764">
    <property type="entry name" value="Ade_phspho_trans"/>
</dbReference>
<dbReference type="InterPro" id="IPR000836">
    <property type="entry name" value="PRibTrfase_dom"/>
</dbReference>
<dbReference type="InterPro" id="IPR029057">
    <property type="entry name" value="PRTase-like"/>
</dbReference>
<dbReference type="InterPro" id="IPR050054">
    <property type="entry name" value="UPRTase/APRTase"/>
</dbReference>
<dbReference type="NCBIfam" id="TIGR01090">
    <property type="entry name" value="apt"/>
    <property type="match status" value="1"/>
</dbReference>
<dbReference type="NCBIfam" id="NF002634">
    <property type="entry name" value="PRK02304.1-3"/>
    <property type="match status" value="1"/>
</dbReference>
<dbReference type="NCBIfam" id="NF002636">
    <property type="entry name" value="PRK02304.1-5"/>
    <property type="match status" value="1"/>
</dbReference>
<dbReference type="PANTHER" id="PTHR32315">
    <property type="entry name" value="ADENINE PHOSPHORIBOSYLTRANSFERASE"/>
    <property type="match status" value="1"/>
</dbReference>
<dbReference type="PANTHER" id="PTHR32315:SF3">
    <property type="entry name" value="ADENINE PHOSPHORIBOSYLTRANSFERASE"/>
    <property type="match status" value="1"/>
</dbReference>
<dbReference type="Pfam" id="PF00156">
    <property type="entry name" value="Pribosyltran"/>
    <property type="match status" value="1"/>
</dbReference>
<dbReference type="SUPFAM" id="SSF53271">
    <property type="entry name" value="PRTase-like"/>
    <property type="match status" value="1"/>
</dbReference>
<dbReference type="PROSITE" id="PS00103">
    <property type="entry name" value="PUR_PYR_PR_TRANSFER"/>
    <property type="match status" value="1"/>
</dbReference>
<organism>
    <name type="scientific">Mus pahari</name>
    <name type="common">Gairdner's shrew-mouse</name>
    <name type="synonym">Coelomys pahari</name>
    <dbReference type="NCBI Taxonomy" id="10093"/>
    <lineage>
        <taxon>Eukaryota</taxon>
        <taxon>Metazoa</taxon>
        <taxon>Chordata</taxon>
        <taxon>Craniata</taxon>
        <taxon>Vertebrata</taxon>
        <taxon>Euteleostomi</taxon>
        <taxon>Mammalia</taxon>
        <taxon>Eutheria</taxon>
        <taxon>Euarchontoglires</taxon>
        <taxon>Glires</taxon>
        <taxon>Rodentia</taxon>
        <taxon>Myomorpha</taxon>
        <taxon>Muroidea</taxon>
        <taxon>Muridae</taxon>
        <taxon>Murinae</taxon>
        <taxon>Mus</taxon>
        <taxon>Coelomys</taxon>
    </lineage>
</organism>
<keyword id="KW-0007">Acetylation</keyword>
<keyword id="KW-0963">Cytoplasm</keyword>
<keyword id="KW-0328">Glycosyltransferase</keyword>
<keyword id="KW-0597">Phosphoprotein</keyword>
<keyword id="KW-0660">Purine salvage</keyword>
<keyword id="KW-0808">Transferase</keyword>
<comment type="function">
    <text evidence="1">Catalyzes a salvage reaction resulting in the formation of AMP, that is energically less costly than de novo synthesis.</text>
</comment>
<comment type="catalytic activity">
    <reaction evidence="1">
        <text>AMP + diphosphate = 5-phospho-alpha-D-ribose 1-diphosphate + adenine</text>
        <dbReference type="Rhea" id="RHEA:16609"/>
        <dbReference type="ChEBI" id="CHEBI:16708"/>
        <dbReference type="ChEBI" id="CHEBI:33019"/>
        <dbReference type="ChEBI" id="CHEBI:58017"/>
        <dbReference type="ChEBI" id="CHEBI:456215"/>
        <dbReference type="EC" id="2.4.2.7"/>
    </reaction>
</comment>
<comment type="pathway">
    <text evidence="1">Purine metabolism; AMP biosynthesis via salvage pathway; AMP from adenine: step 1/1.</text>
</comment>
<comment type="subunit">
    <text>Homodimer.</text>
</comment>
<comment type="subcellular location">
    <subcellularLocation>
        <location>Cytoplasm</location>
    </subcellularLocation>
</comment>
<comment type="similarity">
    <text evidence="3">Belongs to the purine/pyrimidine phosphoribosyltransferase family.</text>
</comment>
<accession>P47956</accession>
<sequence length="180" mass="19712">MSESELKLVARRIRSFPDFPIPGVLFRDISPLLKDPDSFRASIRLLASHLKSTHSGKIDYIAGLDSRGFLFGPSLAQELGVGCVLIRKQGKLPGPTISASYALEYGKAELEIQKDALEPGQRVVIVDDLLATGGTMFAACDLLHQLRAEVVECVSLVELTSLKGRERLGPIPFFSLLQYD</sequence>
<protein>
    <recommendedName>
        <fullName evidence="1">Adenine phosphoribosyltransferase</fullName>
        <shortName>APRT</shortName>
        <ecNumber evidence="1">2.4.2.7</ecNumber>
    </recommendedName>
</protein>
<proteinExistence type="inferred from homology"/>
<gene>
    <name evidence="1" type="primary">Aprt</name>
</gene>
<reference key="1">
    <citation type="journal article" date="1997" name="Heredity">
        <title>Substitution rate variation in closely related rodent species.</title>
        <authorList>
            <person name="Fieldhouse D."/>
            <person name="Yazdani F."/>
            <person name="Golding G.B."/>
        </authorList>
    </citation>
    <scope>NUCLEOTIDE SEQUENCE [GENOMIC DNA]</scope>
</reference>
<feature type="initiator methionine" description="Removed" evidence="2">
    <location>
        <position position="1"/>
    </location>
</feature>
<feature type="chain" id="PRO_0000149507" description="Adenine phosphoribosyltransferase">
    <location>
        <begin position="2"/>
        <end position="180"/>
    </location>
</feature>
<feature type="modified residue" description="N-acetylserine" evidence="2">
    <location>
        <position position="2"/>
    </location>
</feature>
<feature type="modified residue" description="Phosphoserine" evidence="1">
    <location>
        <position position="4"/>
    </location>
</feature>
<feature type="modified residue" description="Phosphoserine" evidence="1">
    <location>
        <position position="15"/>
    </location>
</feature>
<feature type="modified residue" description="Phosphoserine" evidence="1">
    <location>
        <position position="30"/>
    </location>
</feature>
<feature type="modified residue" description="Phosphotyrosine" evidence="1">
    <location>
        <position position="60"/>
    </location>
</feature>
<feature type="modified residue" description="Phosphoserine" evidence="1">
    <location>
        <position position="66"/>
    </location>
</feature>
<feature type="modified residue" description="N6-acetyllysine" evidence="1">
    <location>
        <position position="114"/>
    </location>
</feature>
<feature type="modified residue" description="Phosphothreonine" evidence="1">
    <location>
        <position position="135"/>
    </location>
</feature>